<gene>
    <name evidence="1" type="primary">aspS</name>
    <name type="ordered locus">LIC_12108</name>
</gene>
<evidence type="ECO:0000255" key="1">
    <source>
        <dbReference type="HAMAP-Rule" id="MF_00044"/>
    </source>
</evidence>
<reference key="1">
    <citation type="journal article" date="2004" name="J. Bacteriol.">
        <title>Comparative genomics of two Leptospira interrogans serovars reveals novel insights into physiology and pathogenesis.</title>
        <authorList>
            <person name="Nascimento A.L.T.O."/>
            <person name="Ko A.I."/>
            <person name="Martins E.A.L."/>
            <person name="Monteiro-Vitorello C.B."/>
            <person name="Ho P.L."/>
            <person name="Haake D.A."/>
            <person name="Verjovski-Almeida S."/>
            <person name="Hartskeerl R.A."/>
            <person name="Marques M.V."/>
            <person name="Oliveira M.C."/>
            <person name="Menck C.F.M."/>
            <person name="Leite L.C.C."/>
            <person name="Carrer H."/>
            <person name="Coutinho L.L."/>
            <person name="Degrave W.M."/>
            <person name="Dellagostin O.A."/>
            <person name="El-Dorry H."/>
            <person name="Ferro E.S."/>
            <person name="Ferro M.I.T."/>
            <person name="Furlan L.R."/>
            <person name="Gamberini M."/>
            <person name="Giglioti E.A."/>
            <person name="Goes-Neto A."/>
            <person name="Goldman G.H."/>
            <person name="Goldman M.H.S."/>
            <person name="Harakava R."/>
            <person name="Jeronimo S.M.B."/>
            <person name="Junqueira-de-Azevedo I.L.M."/>
            <person name="Kimura E.T."/>
            <person name="Kuramae E.E."/>
            <person name="Lemos E.G.M."/>
            <person name="Lemos M.V.F."/>
            <person name="Marino C.L."/>
            <person name="Nunes L.R."/>
            <person name="de Oliveira R.C."/>
            <person name="Pereira G.G."/>
            <person name="Reis M.S."/>
            <person name="Schriefer A."/>
            <person name="Siqueira W.J."/>
            <person name="Sommer P."/>
            <person name="Tsai S.M."/>
            <person name="Simpson A.J.G."/>
            <person name="Ferro J.A."/>
            <person name="Camargo L.E.A."/>
            <person name="Kitajima J.P."/>
            <person name="Setubal J.C."/>
            <person name="Van Sluys M.A."/>
        </authorList>
    </citation>
    <scope>NUCLEOTIDE SEQUENCE [LARGE SCALE GENOMIC DNA]</scope>
    <source>
        <strain>Fiocruz L1-130</strain>
    </source>
</reference>
<protein>
    <recommendedName>
        <fullName evidence="1">Aspartate--tRNA ligase</fullName>
        <ecNumber evidence="1">6.1.1.12</ecNumber>
    </recommendedName>
    <alternativeName>
        <fullName evidence="1">Aspartyl-tRNA synthetase</fullName>
        <shortName evidence="1">AspRS</shortName>
    </alternativeName>
</protein>
<name>SYD_LEPIC</name>
<accession>Q72QK5</accession>
<keyword id="KW-0030">Aminoacyl-tRNA synthetase</keyword>
<keyword id="KW-0067">ATP-binding</keyword>
<keyword id="KW-0963">Cytoplasm</keyword>
<keyword id="KW-0436">Ligase</keyword>
<keyword id="KW-0547">Nucleotide-binding</keyword>
<keyword id="KW-0648">Protein biosynthesis</keyword>
<dbReference type="EC" id="6.1.1.12" evidence="1"/>
<dbReference type="EMBL" id="AE016823">
    <property type="protein sequence ID" value="AAS70679.1"/>
    <property type="molecule type" value="Genomic_DNA"/>
</dbReference>
<dbReference type="RefSeq" id="WP_000683520.1">
    <property type="nucleotide sequence ID" value="NC_005823.1"/>
</dbReference>
<dbReference type="SMR" id="Q72QK5"/>
<dbReference type="GeneID" id="61141993"/>
<dbReference type="KEGG" id="lic:LIC_12108"/>
<dbReference type="HOGENOM" id="CLU_014330_3_2_12"/>
<dbReference type="Proteomes" id="UP000007037">
    <property type="component" value="Chromosome I"/>
</dbReference>
<dbReference type="GO" id="GO:0005737">
    <property type="term" value="C:cytoplasm"/>
    <property type="evidence" value="ECO:0007669"/>
    <property type="project" value="UniProtKB-SubCell"/>
</dbReference>
<dbReference type="GO" id="GO:0004815">
    <property type="term" value="F:aspartate-tRNA ligase activity"/>
    <property type="evidence" value="ECO:0007669"/>
    <property type="project" value="UniProtKB-UniRule"/>
</dbReference>
<dbReference type="GO" id="GO:0005524">
    <property type="term" value="F:ATP binding"/>
    <property type="evidence" value="ECO:0007669"/>
    <property type="project" value="UniProtKB-UniRule"/>
</dbReference>
<dbReference type="GO" id="GO:0003676">
    <property type="term" value="F:nucleic acid binding"/>
    <property type="evidence" value="ECO:0007669"/>
    <property type="project" value="InterPro"/>
</dbReference>
<dbReference type="GO" id="GO:0006422">
    <property type="term" value="P:aspartyl-tRNA aminoacylation"/>
    <property type="evidence" value="ECO:0007669"/>
    <property type="project" value="UniProtKB-UniRule"/>
</dbReference>
<dbReference type="CDD" id="cd00777">
    <property type="entry name" value="AspRS_core"/>
    <property type="match status" value="1"/>
</dbReference>
<dbReference type="CDD" id="cd04317">
    <property type="entry name" value="EcAspRS_like_N"/>
    <property type="match status" value="1"/>
</dbReference>
<dbReference type="Gene3D" id="3.30.930.10">
    <property type="entry name" value="Bira Bifunctional Protein, Domain 2"/>
    <property type="match status" value="1"/>
</dbReference>
<dbReference type="Gene3D" id="3.30.1360.30">
    <property type="entry name" value="GAD-like domain"/>
    <property type="match status" value="1"/>
</dbReference>
<dbReference type="Gene3D" id="2.40.50.140">
    <property type="entry name" value="Nucleic acid-binding proteins"/>
    <property type="match status" value="1"/>
</dbReference>
<dbReference type="HAMAP" id="MF_00044">
    <property type="entry name" value="Asp_tRNA_synth_type1"/>
    <property type="match status" value="1"/>
</dbReference>
<dbReference type="InterPro" id="IPR004364">
    <property type="entry name" value="Aa-tRNA-synt_II"/>
</dbReference>
<dbReference type="InterPro" id="IPR006195">
    <property type="entry name" value="aa-tRNA-synth_II"/>
</dbReference>
<dbReference type="InterPro" id="IPR045864">
    <property type="entry name" value="aa-tRNA-synth_II/BPL/LPL"/>
</dbReference>
<dbReference type="InterPro" id="IPR004524">
    <property type="entry name" value="Asp-tRNA-ligase_1"/>
</dbReference>
<dbReference type="InterPro" id="IPR047089">
    <property type="entry name" value="Asp-tRNA-ligase_1_N"/>
</dbReference>
<dbReference type="InterPro" id="IPR002312">
    <property type="entry name" value="Asp/Asn-tRNA-synth_IIb"/>
</dbReference>
<dbReference type="InterPro" id="IPR047090">
    <property type="entry name" value="AspRS_core"/>
</dbReference>
<dbReference type="InterPro" id="IPR004115">
    <property type="entry name" value="GAD-like_sf"/>
</dbReference>
<dbReference type="InterPro" id="IPR029351">
    <property type="entry name" value="GAD_dom"/>
</dbReference>
<dbReference type="InterPro" id="IPR012340">
    <property type="entry name" value="NA-bd_OB-fold"/>
</dbReference>
<dbReference type="InterPro" id="IPR004365">
    <property type="entry name" value="NA-bd_OB_tRNA"/>
</dbReference>
<dbReference type="NCBIfam" id="TIGR00459">
    <property type="entry name" value="aspS_bact"/>
    <property type="match status" value="1"/>
</dbReference>
<dbReference type="NCBIfam" id="NF001750">
    <property type="entry name" value="PRK00476.1"/>
    <property type="match status" value="1"/>
</dbReference>
<dbReference type="PANTHER" id="PTHR22594:SF5">
    <property type="entry name" value="ASPARTATE--TRNA LIGASE, MITOCHONDRIAL"/>
    <property type="match status" value="1"/>
</dbReference>
<dbReference type="PANTHER" id="PTHR22594">
    <property type="entry name" value="ASPARTYL/LYSYL-TRNA SYNTHETASE"/>
    <property type="match status" value="1"/>
</dbReference>
<dbReference type="Pfam" id="PF02938">
    <property type="entry name" value="GAD"/>
    <property type="match status" value="1"/>
</dbReference>
<dbReference type="Pfam" id="PF00152">
    <property type="entry name" value="tRNA-synt_2"/>
    <property type="match status" value="1"/>
</dbReference>
<dbReference type="Pfam" id="PF01336">
    <property type="entry name" value="tRNA_anti-codon"/>
    <property type="match status" value="1"/>
</dbReference>
<dbReference type="PRINTS" id="PR01042">
    <property type="entry name" value="TRNASYNTHASP"/>
</dbReference>
<dbReference type="SUPFAM" id="SSF55681">
    <property type="entry name" value="Class II aaRS and biotin synthetases"/>
    <property type="match status" value="1"/>
</dbReference>
<dbReference type="SUPFAM" id="SSF55261">
    <property type="entry name" value="GAD domain-like"/>
    <property type="match status" value="1"/>
</dbReference>
<dbReference type="SUPFAM" id="SSF50249">
    <property type="entry name" value="Nucleic acid-binding proteins"/>
    <property type="match status" value="1"/>
</dbReference>
<dbReference type="PROSITE" id="PS50862">
    <property type="entry name" value="AA_TRNA_LIGASE_II"/>
    <property type="match status" value="1"/>
</dbReference>
<feature type="chain" id="PRO_0000110892" description="Aspartate--tRNA ligase">
    <location>
        <begin position="1"/>
        <end position="601"/>
    </location>
</feature>
<feature type="region of interest" description="Aspartate" evidence="1">
    <location>
        <begin position="207"/>
        <end position="210"/>
    </location>
</feature>
<feature type="binding site" evidence="1">
    <location>
        <position position="183"/>
    </location>
    <ligand>
        <name>L-aspartate</name>
        <dbReference type="ChEBI" id="CHEBI:29991"/>
    </ligand>
</feature>
<feature type="binding site" evidence="1">
    <location>
        <begin position="229"/>
        <end position="231"/>
    </location>
    <ligand>
        <name>ATP</name>
        <dbReference type="ChEBI" id="CHEBI:30616"/>
    </ligand>
</feature>
<feature type="binding site" evidence="1">
    <location>
        <position position="229"/>
    </location>
    <ligand>
        <name>L-aspartate</name>
        <dbReference type="ChEBI" id="CHEBI:29991"/>
    </ligand>
</feature>
<feature type="binding site" evidence="1">
    <location>
        <position position="238"/>
    </location>
    <ligand>
        <name>ATP</name>
        <dbReference type="ChEBI" id="CHEBI:30616"/>
    </ligand>
</feature>
<feature type="binding site" evidence="1">
    <location>
        <position position="457"/>
    </location>
    <ligand>
        <name>L-aspartate</name>
        <dbReference type="ChEBI" id="CHEBI:29991"/>
    </ligand>
</feature>
<feature type="binding site" evidence="1">
    <location>
        <position position="497"/>
    </location>
    <ligand>
        <name>ATP</name>
        <dbReference type="ChEBI" id="CHEBI:30616"/>
    </ligand>
</feature>
<feature type="binding site" evidence="1">
    <location>
        <position position="504"/>
    </location>
    <ligand>
        <name>L-aspartate</name>
        <dbReference type="ChEBI" id="CHEBI:29991"/>
    </ligand>
</feature>
<feature type="binding site" evidence="1">
    <location>
        <begin position="549"/>
        <end position="552"/>
    </location>
    <ligand>
        <name>ATP</name>
        <dbReference type="ChEBI" id="CHEBI:30616"/>
    </ligand>
</feature>
<organism>
    <name type="scientific">Leptospira interrogans serogroup Icterohaemorrhagiae serovar copenhageni (strain Fiocruz L1-130)</name>
    <dbReference type="NCBI Taxonomy" id="267671"/>
    <lineage>
        <taxon>Bacteria</taxon>
        <taxon>Pseudomonadati</taxon>
        <taxon>Spirochaetota</taxon>
        <taxon>Spirochaetia</taxon>
        <taxon>Leptospirales</taxon>
        <taxon>Leptospiraceae</taxon>
        <taxon>Leptospira</taxon>
    </lineage>
</organism>
<sequence>MKHWIQENYKNRSWAGELNESQEGKQIVLFGWSFRFRDQGGVIFIDLRDRTGIIQVVARKELLGDSFTLAEKVRSEYVLAVRGTLKKRDLESINPRMQTGTIEVVLDQLEILNVAKTPPFSLDEFDEVSEELKLKYRYLDFRREELKNRMIKRHEFIFAIRNYLNKRKFVEIETPILNKSTPEGARDFLVPSRLNPNQFYALPQSPQIFKQILMVGGMERYFQIVKCFRDEDLRADRQPEFTQLDMEFSFVSQEEILSEIEGLVETIYKEVFNIQLSIPFPRMTYNTAMEEYGSDKPDLRFGMKLVDVSEIVKDCDFNVFAGAVKNGGTVKVVCVPGGSIISRKEIEDYTAWLNRDYKAKGLAYMKHGTEGLESTITKRFKKEELEAISKACGSKEGDMLFFGADEREIVNHSLGALRLKLSERFETPKENEINITWIVDFPMFEWNKDHKRWDALHHPFTSPSDESIPFFESMETLQKNAGNATAKAYDLVMNGVEIGGGSIRIHSKEIQNKVFQVLGINEEEAKEKFGFLLEALEFGAPPHGGLAFGIDRMLMLLTGGKSIRDVIAFPKTQKGLCLMSECPSPVEEKQLQELKIKLAKV</sequence>
<proteinExistence type="inferred from homology"/>
<comment type="function">
    <text evidence="1">Catalyzes the attachment of L-aspartate to tRNA(Asp) in a two-step reaction: L-aspartate is first activated by ATP to form Asp-AMP and then transferred to the acceptor end of tRNA(Asp).</text>
</comment>
<comment type="catalytic activity">
    <reaction evidence="1">
        <text>tRNA(Asp) + L-aspartate + ATP = L-aspartyl-tRNA(Asp) + AMP + diphosphate</text>
        <dbReference type="Rhea" id="RHEA:19649"/>
        <dbReference type="Rhea" id="RHEA-COMP:9660"/>
        <dbReference type="Rhea" id="RHEA-COMP:9678"/>
        <dbReference type="ChEBI" id="CHEBI:29991"/>
        <dbReference type="ChEBI" id="CHEBI:30616"/>
        <dbReference type="ChEBI" id="CHEBI:33019"/>
        <dbReference type="ChEBI" id="CHEBI:78442"/>
        <dbReference type="ChEBI" id="CHEBI:78516"/>
        <dbReference type="ChEBI" id="CHEBI:456215"/>
        <dbReference type="EC" id="6.1.1.12"/>
    </reaction>
</comment>
<comment type="subunit">
    <text evidence="1">Homodimer.</text>
</comment>
<comment type="subcellular location">
    <subcellularLocation>
        <location evidence="1">Cytoplasm</location>
    </subcellularLocation>
</comment>
<comment type="similarity">
    <text evidence="1">Belongs to the class-II aminoacyl-tRNA synthetase family. Type 1 subfamily.</text>
</comment>